<dbReference type="EC" id="2.1.2.1" evidence="1"/>
<dbReference type="EMBL" id="CR522870">
    <property type="protein sequence ID" value="CAG36604.1"/>
    <property type="molecule type" value="Genomic_DNA"/>
</dbReference>
<dbReference type="SMR" id="Q6AM21"/>
<dbReference type="STRING" id="177439.DP1875"/>
<dbReference type="KEGG" id="dps:DP1875"/>
<dbReference type="eggNOG" id="COG0112">
    <property type="taxonomic scope" value="Bacteria"/>
</dbReference>
<dbReference type="HOGENOM" id="CLU_022477_2_1_7"/>
<dbReference type="UniPathway" id="UPA00193"/>
<dbReference type="UniPathway" id="UPA00288">
    <property type="reaction ID" value="UER01023"/>
</dbReference>
<dbReference type="Proteomes" id="UP000000602">
    <property type="component" value="Chromosome"/>
</dbReference>
<dbReference type="GO" id="GO:0005829">
    <property type="term" value="C:cytosol"/>
    <property type="evidence" value="ECO:0007669"/>
    <property type="project" value="TreeGrafter"/>
</dbReference>
<dbReference type="GO" id="GO:0004372">
    <property type="term" value="F:glycine hydroxymethyltransferase activity"/>
    <property type="evidence" value="ECO:0007669"/>
    <property type="project" value="UniProtKB-UniRule"/>
</dbReference>
<dbReference type="GO" id="GO:0030170">
    <property type="term" value="F:pyridoxal phosphate binding"/>
    <property type="evidence" value="ECO:0007669"/>
    <property type="project" value="UniProtKB-UniRule"/>
</dbReference>
<dbReference type="GO" id="GO:0019264">
    <property type="term" value="P:glycine biosynthetic process from serine"/>
    <property type="evidence" value="ECO:0007669"/>
    <property type="project" value="UniProtKB-UniRule"/>
</dbReference>
<dbReference type="GO" id="GO:0035999">
    <property type="term" value="P:tetrahydrofolate interconversion"/>
    <property type="evidence" value="ECO:0007669"/>
    <property type="project" value="UniProtKB-UniRule"/>
</dbReference>
<dbReference type="CDD" id="cd00378">
    <property type="entry name" value="SHMT"/>
    <property type="match status" value="1"/>
</dbReference>
<dbReference type="FunFam" id="3.40.640.10:FF:000001">
    <property type="entry name" value="Serine hydroxymethyltransferase"/>
    <property type="match status" value="1"/>
</dbReference>
<dbReference type="Gene3D" id="3.90.1150.10">
    <property type="entry name" value="Aspartate Aminotransferase, domain 1"/>
    <property type="match status" value="1"/>
</dbReference>
<dbReference type="Gene3D" id="3.40.640.10">
    <property type="entry name" value="Type I PLP-dependent aspartate aminotransferase-like (Major domain)"/>
    <property type="match status" value="1"/>
</dbReference>
<dbReference type="HAMAP" id="MF_00051">
    <property type="entry name" value="SHMT"/>
    <property type="match status" value="1"/>
</dbReference>
<dbReference type="InterPro" id="IPR015424">
    <property type="entry name" value="PyrdxlP-dep_Trfase"/>
</dbReference>
<dbReference type="InterPro" id="IPR015421">
    <property type="entry name" value="PyrdxlP-dep_Trfase_major"/>
</dbReference>
<dbReference type="InterPro" id="IPR015422">
    <property type="entry name" value="PyrdxlP-dep_Trfase_small"/>
</dbReference>
<dbReference type="InterPro" id="IPR001085">
    <property type="entry name" value="Ser_HO-MeTrfase"/>
</dbReference>
<dbReference type="InterPro" id="IPR049943">
    <property type="entry name" value="Ser_HO-MeTrfase-like"/>
</dbReference>
<dbReference type="InterPro" id="IPR019798">
    <property type="entry name" value="Ser_HO-MeTrfase_PLP_BS"/>
</dbReference>
<dbReference type="InterPro" id="IPR039429">
    <property type="entry name" value="SHMT-like_dom"/>
</dbReference>
<dbReference type="NCBIfam" id="NF000586">
    <property type="entry name" value="PRK00011.1"/>
    <property type="match status" value="1"/>
</dbReference>
<dbReference type="PANTHER" id="PTHR11680">
    <property type="entry name" value="SERINE HYDROXYMETHYLTRANSFERASE"/>
    <property type="match status" value="1"/>
</dbReference>
<dbReference type="PANTHER" id="PTHR11680:SF35">
    <property type="entry name" value="SERINE HYDROXYMETHYLTRANSFERASE 1"/>
    <property type="match status" value="1"/>
</dbReference>
<dbReference type="Pfam" id="PF00464">
    <property type="entry name" value="SHMT"/>
    <property type="match status" value="1"/>
</dbReference>
<dbReference type="PIRSF" id="PIRSF000412">
    <property type="entry name" value="SHMT"/>
    <property type="match status" value="1"/>
</dbReference>
<dbReference type="SUPFAM" id="SSF53383">
    <property type="entry name" value="PLP-dependent transferases"/>
    <property type="match status" value="1"/>
</dbReference>
<dbReference type="PROSITE" id="PS00096">
    <property type="entry name" value="SHMT"/>
    <property type="match status" value="1"/>
</dbReference>
<sequence length="425" mass="45871">MHKTERGDAMTALQQQDPEIFSLIQQEEVRQHNKIRLIASENYVSSAVLEATGSILTNKYSEGYPGKRYYEGQQLIDQIESIAIDRAKAVFGAEHVNVQPYSGSPANMAVYLAFLKPGDTILGMALPHGGHLTHGSKVSISGKYFNAVSYALNEEGILDYEEIRNKALECKPKILIAGHSAYPRILDFAKFREIADEVGALLMVDMAHFAGLVAGGVHPSPFPYADVVTTTTHKSLRGPRGAMIMCKAEYAKAIDKAVFPGMQGGPHDSTTAAIAVALKEASTDSFKKYTAQVVENAASLADVLIEKGFNLVTGGTENHLMLIDLSNKNITGKQAAKALDAAGIVLNCNSVPFDKRKPFDPSGIRLGTCAITSRGFAKAEMVILGNMMDRVVNNFEDSAVLAEIAQEVQALCDKFPAPGLEHIAK</sequence>
<reference key="1">
    <citation type="journal article" date="2004" name="Environ. Microbiol.">
        <title>The genome of Desulfotalea psychrophila, a sulfate-reducing bacterium from permanently cold Arctic sediments.</title>
        <authorList>
            <person name="Rabus R."/>
            <person name="Ruepp A."/>
            <person name="Frickey T."/>
            <person name="Rattei T."/>
            <person name="Fartmann B."/>
            <person name="Stark M."/>
            <person name="Bauer M."/>
            <person name="Zibat A."/>
            <person name="Lombardot T."/>
            <person name="Becker I."/>
            <person name="Amann J."/>
            <person name="Gellner K."/>
            <person name="Teeling H."/>
            <person name="Leuschner W.D."/>
            <person name="Gloeckner F.-O."/>
            <person name="Lupas A.N."/>
            <person name="Amann R."/>
            <person name="Klenk H.-P."/>
        </authorList>
    </citation>
    <scope>NUCLEOTIDE SEQUENCE [LARGE SCALE GENOMIC DNA]</scope>
    <source>
        <strain>DSM 12343 / LSv54</strain>
    </source>
</reference>
<name>GLYA_DESPS</name>
<comment type="function">
    <text evidence="1">Catalyzes the reversible interconversion of serine and glycine with tetrahydrofolate (THF) serving as the one-carbon carrier. This reaction serves as the major source of one-carbon groups required for the biosynthesis of purines, thymidylate, methionine, and other important biomolecules. Also exhibits THF-independent aldolase activity toward beta-hydroxyamino acids, producing glycine and aldehydes, via a retro-aldol mechanism.</text>
</comment>
<comment type="catalytic activity">
    <reaction evidence="1">
        <text>(6R)-5,10-methylene-5,6,7,8-tetrahydrofolate + glycine + H2O = (6S)-5,6,7,8-tetrahydrofolate + L-serine</text>
        <dbReference type="Rhea" id="RHEA:15481"/>
        <dbReference type="ChEBI" id="CHEBI:15377"/>
        <dbReference type="ChEBI" id="CHEBI:15636"/>
        <dbReference type="ChEBI" id="CHEBI:33384"/>
        <dbReference type="ChEBI" id="CHEBI:57305"/>
        <dbReference type="ChEBI" id="CHEBI:57453"/>
        <dbReference type="EC" id="2.1.2.1"/>
    </reaction>
</comment>
<comment type="cofactor">
    <cofactor evidence="1">
        <name>pyridoxal 5'-phosphate</name>
        <dbReference type="ChEBI" id="CHEBI:597326"/>
    </cofactor>
</comment>
<comment type="pathway">
    <text evidence="1">One-carbon metabolism; tetrahydrofolate interconversion.</text>
</comment>
<comment type="pathway">
    <text evidence="1">Amino-acid biosynthesis; glycine biosynthesis; glycine from L-serine: step 1/1.</text>
</comment>
<comment type="subunit">
    <text evidence="1">Homodimer.</text>
</comment>
<comment type="subcellular location">
    <subcellularLocation>
        <location evidence="1">Cytoplasm</location>
    </subcellularLocation>
</comment>
<comment type="similarity">
    <text evidence="1">Belongs to the SHMT family.</text>
</comment>
<accession>Q6AM21</accession>
<keyword id="KW-0028">Amino-acid biosynthesis</keyword>
<keyword id="KW-0963">Cytoplasm</keyword>
<keyword id="KW-0554">One-carbon metabolism</keyword>
<keyword id="KW-0663">Pyridoxal phosphate</keyword>
<keyword id="KW-1185">Reference proteome</keyword>
<keyword id="KW-0808">Transferase</keyword>
<organism>
    <name type="scientific">Desulfotalea psychrophila (strain LSv54 / DSM 12343)</name>
    <dbReference type="NCBI Taxonomy" id="177439"/>
    <lineage>
        <taxon>Bacteria</taxon>
        <taxon>Pseudomonadati</taxon>
        <taxon>Thermodesulfobacteriota</taxon>
        <taxon>Desulfobulbia</taxon>
        <taxon>Desulfobulbales</taxon>
        <taxon>Desulfocapsaceae</taxon>
        <taxon>Desulfotalea</taxon>
    </lineage>
</organism>
<feature type="chain" id="PRO_0000113571" description="Serine hydroxymethyltransferase">
    <location>
        <begin position="1"/>
        <end position="425"/>
    </location>
</feature>
<feature type="binding site" evidence="1">
    <location>
        <position position="126"/>
    </location>
    <ligand>
        <name>(6S)-5,6,7,8-tetrahydrofolate</name>
        <dbReference type="ChEBI" id="CHEBI:57453"/>
    </ligand>
</feature>
<feature type="binding site" evidence="1">
    <location>
        <begin position="130"/>
        <end position="132"/>
    </location>
    <ligand>
        <name>(6S)-5,6,7,8-tetrahydrofolate</name>
        <dbReference type="ChEBI" id="CHEBI:57453"/>
    </ligand>
</feature>
<feature type="site" description="Plays an important role in substrate specificity" evidence="1">
    <location>
        <position position="233"/>
    </location>
</feature>
<feature type="modified residue" description="N6-(pyridoxal phosphate)lysine" evidence="1">
    <location>
        <position position="234"/>
    </location>
</feature>
<gene>
    <name evidence="1" type="primary">glyA</name>
    <name type="ordered locus">DP1875</name>
</gene>
<evidence type="ECO:0000255" key="1">
    <source>
        <dbReference type="HAMAP-Rule" id="MF_00051"/>
    </source>
</evidence>
<protein>
    <recommendedName>
        <fullName evidence="1">Serine hydroxymethyltransferase</fullName>
        <shortName evidence="1">SHMT</shortName>
        <shortName evidence="1">Serine methylase</shortName>
        <ecNumber evidence="1">2.1.2.1</ecNumber>
    </recommendedName>
</protein>
<proteinExistence type="inferred from homology"/>